<accession>P14994</accession>
<accession>Q91J27</accession>
<gene>
    <name type="ORF">C3</name>
    <name type="ORF">L3</name>
</gene>
<proteinExistence type="inferred from homology"/>
<sequence length="136" mass="16063">MNVIEDFRTGEPITLHQATNSVEFESVPNPLYMKLLWFERYGPIYQLKIQIRFNYNLRRALNLHKCWIELTITGSNRILTGPRFLKVLKKRLEIYLDNLGLICINNVIRGLNHVLYEEFNFVSSVIQNQSVAMNLY</sequence>
<name>REN_BCTVC</name>
<organism>
    <name type="scientific">Beet curly top virus (strain California/Logan)</name>
    <name type="common">BCTV</name>
    <dbReference type="NCBI Taxonomy" id="268960"/>
    <lineage>
        <taxon>Viruses</taxon>
        <taxon>Monodnaviria</taxon>
        <taxon>Shotokuvirae</taxon>
        <taxon>Cressdnaviricota</taxon>
        <taxon>Repensiviricetes</taxon>
        <taxon>Geplafuvirales</taxon>
        <taxon>Geminiviridae</taxon>
        <taxon>Curtovirus</taxon>
        <taxon>Beet curly top virus</taxon>
    </lineage>
</organism>
<evidence type="ECO:0000250" key="1"/>
<evidence type="ECO:0000269" key="2">
    <source>
    </source>
</evidence>
<evidence type="ECO:0000305" key="3"/>
<keyword id="KW-0945">Host-virus interaction</keyword>
<keyword id="KW-1185">Reference proteome</keyword>
<reference key="1">
    <citation type="journal article" date="1986" name="EMBO J.">
        <title>The nucleotide sequence of an infectious clone of the geminivirus beet curly top virus.</title>
        <authorList>
            <person name="Stanley J."/>
            <person name="Markham P.G."/>
            <person name="Callis R.J."/>
            <person name="Pinner M.S."/>
        </authorList>
    </citation>
    <scope>NUCLEOTIDE SEQUENCE [GENOMIC DNA]</scope>
    <source>
        <strain>Infectious clone pBCT028</strain>
    </source>
</reference>
<reference key="2">
    <citation type="submission" date="2001-05" db="EMBL/GenBank/DDBJ databases">
        <authorList>
            <person name="Bisaro D.M."/>
            <person name="Hormuzdi S.G."/>
        </authorList>
    </citation>
    <scope>NUCLEOTIDE SEQUENCE [GENOMIC DNA]</scope>
</reference>
<reference key="3">
    <citation type="journal article" date="1995" name="Virology">
        <title>Genetic analysis of beet curly top virus: examination of the roles of L2 and L3 genes in viral pathogenesis.</title>
        <authorList>
            <person name="Hormuzdi S.G."/>
            <person name="Bisaro D.M."/>
        </authorList>
    </citation>
    <scope>FUNCTION</scope>
</reference>
<feature type="chain" id="PRO_0000222238" description="Replication enhancer">
    <location>
        <begin position="1"/>
        <end position="136"/>
    </location>
</feature>
<feature type="sequence variant" description="In strain: Infectious clone pBCT028.">
    <original>S</original>
    <variation>N</variation>
    <location>
        <position position="26"/>
    </location>
</feature>
<feature type="sequence variant" description="In strain: Infectious clone pBCT028.">
    <original>N</original>
    <variation>T</variation>
    <location>
        <position position="120"/>
    </location>
</feature>
<dbReference type="EMBL" id="M24597">
    <property type="protein sequence ID" value="AAA42754.1"/>
    <property type="molecule type" value="Genomic_DNA"/>
</dbReference>
<dbReference type="EMBL" id="AF379637">
    <property type="protein sequence ID" value="AAK59262.1"/>
    <property type="molecule type" value="Genomic_DNA"/>
</dbReference>
<dbReference type="PIR" id="S28363">
    <property type="entry name" value="S28363"/>
</dbReference>
<dbReference type="KEGG" id="vg:2546430"/>
<dbReference type="Proteomes" id="UP000006542">
    <property type="component" value="Genome"/>
</dbReference>
<dbReference type="GO" id="GO:0039684">
    <property type="term" value="P:rolling circle single-stranded viral DNA replication"/>
    <property type="evidence" value="ECO:0000314"/>
    <property type="project" value="UniProtKB"/>
</dbReference>
<dbReference type="InterPro" id="IPR000657">
    <property type="entry name" value="Gemini_AL3"/>
</dbReference>
<dbReference type="Pfam" id="PF01407">
    <property type="entry name" value="Gemini_AL3"/>
    <property type="match status" value="1"/>
</dbReference>
<dbReference type="PRINTS" id="PR00231">
    <property type="entry name" value="GEMCOATAL3"/>
</dbReference>
<protein>
    <recommendedName>
        <fullName>Replication enhancer</fullName>
        <shortName>REn</shortName>
    </recommendedName>
    <alternativeName>
        <fullName>16.1 kDa protein</fullName>
    </alternativeName>
    <alternativeName>
        <fullName>Protein C3</fullName>
    </alternativeName>
    <alternativeName>
        <fullName>Protein L3</fullName>
    </alternativeName>
</protein>
<comment type="function">
    <text evidence="1 2">Increases viral DNA accumulation. Enhances infectivity and symptom expression (By similarity).</text>
</comment>
<comment type="subunit">
    <text>Homooligomer. Interacts with the replication-associated protein (REP). Interacts with host proliferating cell nuclear antigen (PCNA). Interacts with host retinoblastoma-related protein 1 (RBR1), and may thereby deregulate the host cell cycle. Oligomerization and interaction with PCNA are necessary for optimal replication enhancement.</text>
</comment>
<comment type="similarity">
    <text evidence="3">Belongs to the geminiviridae replication enhancer protein family.</text>
</comment>
<organismHost>
    <name type="scientific">Beta vulgaris</name>
    <name type="common">Sugar beet</name>
    <dbReference type="NCBI Taxonomy" id="161934"/>
</organismHost>
<organismHost>
    <name type="scientific">Capsicum</name>
    <name type="common">peppers</name>
    <dbReference type="NCBI Taxonomy" id="4071"/>
</organismHost>
<organismHost>
    <name type="scientific">Cucurbitaceae</name>
    <dbReference type="NCBI Taxonomy" id="3650"/>
</organismHost>
<organismHost>
    <name type="scientific">Linum</name>
    <dbReference type="NCBI Taxonomy" id="4005"/>
</organismHost>
<organismHost>
    <name type="scientific">Phaseolus vulgaris</name>
    <name type="common">Kidney bean</name>
    <name type="synonym">French bean</name>
    <dbReference type="NCBI Taxonomy" id="3885"/>
</organismHost>
<organismHost>
    <name type="scientific">Solanum lycopersicum</name>
    <name type="common">Tomato</name>
    <name type="synonym">Lycopersicon esculentum</name>
    <dbReference type="NCBI Taxonomy" id="4081"/>
</organismHost>
<organismHost>
    <name type="scientific">Solanum tuberosum</name>
    <name type="common">Potato</name>
    <dbReference type="NCBI Taxonomy" id="4113"/>
</organismHost>
<organismHost>
    <name type="scientific">Spinacia oleracea</name>
    <name type="common">Spinach</name>
    <dbReference type="NCBI Taxonomy" id="3562"/>
</organismHost>